<sequence>MADKEATVYIVDVGKSMGERRNGRDLTDLEWAMKYVWDCITNTVATGRKTAMLGVIGLKTDGTDNELGDESHFSHISVLSEIKQFLMSDIRELGERIKPSSVDKGDAISALILAIQMIITHCKKLKWKRKIVLITNGLGRMNSENLDDIVSKVKEDNIELIILDLTGRRGPDFDDAEYGIKEEDKDPHKASNETLLRTITERCDGVFGTLEQAVEETEIPRVKPVRPVASFKGFLQLGNPEEYDTAVRIPVERYPRTMVAKPPTASQFVLRSDLAAGQEGPVSSTAVPETQPEDGSNLTNVRNLRTYQVSDESAPGGKIDVERDDLAKGYEYGRTAVHISETDENITRLETTAAMELVGFIQSERYDRYMHLSNTHIIIANRANDKASLALSSFIHALFELESYAVARLVTKENKPPTLVLLAPSIEPDYECLLEVQLPFAEDVRTYRFPPLDHVVTVSGKVVTQHRNLPNDDLLDAMDKYVDSMELKGTDEDGDLVNTPFPIDDSFSPVLHRVNAAIRSRAIHPNDPIPPPARILTQFSQPPEHLLKNAERHLKRLIEVADVKKVPPKAKGRKRAREPEKPLSGLDVDSLLHQEKRVRISPNNAIPEFKQTLAQAENIETMKDAVKQMRSILEDQIRHSLGDANYDRVTEGLGVVREELIAYEEPGLYNDLIRKLKEALLKEKLGGDQRELWWLLKRSKLGLIEQRESELSEVTEEEAKKFMSA</sequence>
<comment type="function">
    <text evidence="1">Single-stranded DNA-dependent ATP-dependent helicase. Involved in non-homologous end joining (NHEJ) DNA double strand break repair. DNA-binding is sequence-independent but has a high affinity to nicks in double-stranded DNA and to the ends of duplex DNA. Binds to naturally occurring chromosomal ends, and therefore provides chromosomal end protection. Required also for telomere recombination to repair telomeric ends in the absence of telomerase. ku70, of the ku70/ku80 heterodimer, binds to the stem loop of tlc1, the RNA component of telomerase. Involved in telomere maintenance. Interacts with telomeric repeats and subtelomeric sequences thereby controlling telomere length and protecting against subtelomeric rearrangement. Maintains telomeric chromatin, which is involved in silencing the expression of genes located at the telomere. Required for mating-type switching (By similarity).</text>
</comment>
<comment type="catalytic activity">
    <reaction>
        <text>ATP + H2O = ADP + phosphate + H(+)</text>
        <dbReference type="Rhea" id="RHEA:13065"/>
        <dbReference type="ChEBI" id="CHEBI:15377"/>
        <dbReference type="ChEBI" id="CHEBI:15378"/>
        <dbReference type="ChEBI" id="CHEBI:30616"/>
        <dbReference type="ChEBI" id="CHEBI:43474"/>
        <dbReference type="ChEBI" id="CHEBI:456216"/>
        <dbReference type="EC" id="3.6.4.12"/>
    </reaction>
</comment>
<comment type="subunit">
    <text evidence="1">Heterodimer of Ku70 and Ku80.</text>
</comment>
<comment type="subcellular location">
    <subcellularLocation>
        <location evidence="1">Nucleus</location>
    </subcellularLocation>
    <subcellularLocation>
        <location evidence="1">Chromosome</location>
        <location evidence="1">Telomere</location>
    </subcellularLocation>
</comment>
<comment type="similarity">
    <text evidence="3">Belongs to the ku80 family.</text>
</comment>
<protein>
    <recommendedName>
        <fullName>ATP-dependent DNA helicase II subunit 2</fullName>
        <ecNumber>3.6.4.12</ecNumber>
    </recommendedName>
    <alternativeName>
        <fullName>ATP-dependent DNA helicase II subunit Ku80</fullName>
    </alternativeName>
</protein>
<accession>Q5B4H8</accession>
<accession>C8V875</accession>
<gene>
    <name type="primary">ku80</name>
    <name type="ORF">AN4552</name>
</gene>
<proteinExistence type="inferred from homology"/>
<dbReference type="EC" id="3.6.4.12"/>
<dbReference type="EMBL" id="AACD01000078">
    <property type="protein sequence ID" value="EAA60895.1"/>
    <property type="molecule type" value="Genomic_DNA"/>
</dbReference>
<dbReference type="EMBL" id="BN001303">
    <property type="protein sequence ID" value="CBF77271.1"/>
    <property type="molecule type" value="Genomic_DNA"/>
</dbReference>
<dbReference type="RefSeq" id="XP_662156.1">
    <property type="nucleotide sequence ID" value="XM_657064.1"/>
</dbReference>
<dbReference type="SMR" id="Q5B4H8"/>
<dbReference type="FunCoup" id="Q5B4H8">
    <property type="interactions" value="137"/>
</dbReference>
<dbReference type="STRING" id="227321.Q5B4H8"/>
<dbReference type="EnsemblFungi" id="CBF77271">
    <property type="protein sequence ID" value="CBF77271"/>
    <property type="gene ID" value="ANIA_04552"/>
</dbReference>
<dbReference type="KEGG" id="ani:ANIA_04552"/>
<dbReference type="eggNOG" id="KOG2326">
    <property type="taxonomic scope" value="Eukaryota"/>
</dbReference>
<dbReference type="HOGENOM" id="CLU_010975_1_1_1"/>
<dbReference type="InParanoid" id="Q5B4H8"/>
<dbReference type="OMA" id="WAMQYVW"/>
<dbReference type="OrthoDB" id="30826at2759"/>
<dbReference type="Proteomes" id="UP000000560">
    <property type="component" value="Chromosome III"/>
</dbReference>
<dbReference type="GO" id="GO:0000781">
    <property type="term" value="C:chromosome, telomeric region"/>
    <property type="evidence" value="ECO:0007669"/>
    <property type="project" value="UniProtKB-SubCell"/>
</dbReference>
<dbReference type="GO" id="GO:0043564">
    <property type="term" value="C:Ku70:Ku80 complex"/>
    <property type="evidence" value="ECO:0000318"/>
    <property type="project" value="GO_Central"/>
</dbReference>
<dbReference type="GO" id="GO:0005524">
    <property type="term" value="F:ATP binding"/>
    <property type="evidence" value="ECO:0007669"/>
    <property type="project" value="UniProtKB-KW"/>
</dbReference>
<dbReference type="GO" id="GO:0016887">
    <property type="term" value="F:ATP hydrolysis activity"/>
    <property type="evidence" value="ECO:0007669"/>
    <property type="project" value="RHEA"/>
</dbReference>
<dbReference type="GO" id="GO:0003684">
    <property type="term" value="F:damaged DNA binding"/>
    <property type="evidence" value="ECO:0007669"/>
    <property type="project" value="InterPro"/>
</dbReference>
<dbReference type="GO" id="GO:0004386">
    <property type="term" value="F:helicase activity"/>
    <property type="evidence" value="ECO:0007669"/>
    <property type="project" value="UniProtKB-KW"/>
</dbReference>
<dbReference type="GO" id="GO:0042162">
    <property type="term" value="F:telomeric DNA binding"/>
    <property type="evidence" value="ECO:0000318"/>
    <property type="project" value="GO_Central"/>
</dbReference>
<dbReference type="GO" id="GO:0006310">
    <property type="term" value="P:DNA recombination"/>
    <property type="evidence" value="ECO:0007669"/>
    <property type="project" value="UniProtKB-KW"/>
</dbReference>
<dbReference type="GO" id="GO:0006303">
    <property type="term" value="P:double-strand break repair via nonhomologous end joining"/>
    <property type="evidence" value="ECO:0000318"/>
    <property type="project" value="GO_Central"/>
</dbReference>
<dbReference type="GO" id="GO:0000723">
    <property type="term" value="P:telomere maintenance"/>
    <property type="evidence" value="ECO:0000318"/>
    <property type="project" value="GO_Central"/>
</dbReference>
<dbReference type="CDD" id="cd00873">
    <property type="entry name" value="KU80"/>
    <property type="match status" value="1"/>
</dbReference>
<dbReference type="FunFam" id="1.25.40.240:FF:000002">
    <property type="entry name" value="ATP-dependent DNA helicase II subunit 2"/>
    <property type="match status" value="1"/>
</dbReference>
<dbReference type="FunFam" id="2.40.290.10:FF:000008">
    <property type="entry name" value="ATP-dependent DNA helicase II subunit 2"/>
    <property type="match status" value="1"/>
</dbReference>
<dbReference type="FunFam" id="3.40.50.410:FF:000073">
    <property type="entry name" value="ATP-dependent DNA helicase II subunit 2"/>
    <property type="match status" value="1"/>
</dbReference>
<dbReference type="FunFam" id="1.10.1600.10:FF:000002">
    <property type="entry name" value="X-ray repair cross-complementing protein 5"/>
    <property type="match status" value="1"/>
</dbReference>
<dbReference type="Gene3D" id="1.10.1600.10">
    <property type="match status" value="1"/>
</dbReference>
<dbReference type="Gene3D" id="2.40.290.10">
    <property type="match status" value="1"/>
</dbReference>
<dbReference type="Gene3D" id="1.25.40.240">
    <property type="entry name" value="Ku, C-terminal domain"/>
    <property type="match status" value="1"/>
</dbReference>
<dbReference type="Gene3D" id="3.40.50.410">
    <property type="entry name" value="von Willebrand factor, type A domain"/>
    <property type="match status" value="1"/>
</dbReference>
<dbReference type="InterPro" id="IPR006164">
    <property type="entry name" value="Ku70/Ku80_beta-barrel_dom"/>
</dbReference>
<dbReference type="InterPro" id="IPR024193">
    <property type="entry name" value="Ku80"/>
</dbReference>
<dbReference type="InterPro" id="IPR036494">
    <property type="entry name" value="Ku_C_sf"/>
</dbReference>
<dbReference type="InterPro" id="IPR005161">
    <property type="entry name" value="Ku_N"/>
</dbReference>
<dbReference type="InterPro" id="IPR014893">
    <property type="entry name" value="Ku_PK_bind"/>
</dbReference>
<dbReference type="InterPro" id="IPR016194">
    <property type="entry name" value="SPOC-like_C_dom_sf"/>
</dbReference>
<dbReference type="InterPro" id="IPR002035">
    <property type="entry name" value="VWF_A"/>
</dbReference>
<dbReference type="InterPro" id="IPR036465">
    <property type="entry name" value="vWFA_dom_sf"/>
</dbReference>
<dbReference type="PANTHER" id="PTHR12604">
    <property type="entry name" value="KU AUTOANTIGEN DNA HELICASE"/>
    <property type="match status" value="1"/>
</dbReference>
<dbReference type="PANTHER" id="PTHR12604:SF4">
    <property type="entry name" value="X-RAY REPAIR CROSS-COMPLEMENTING PROTEIN 5"/>
    <property type="match status" value="1"/>
</dbReference>
<dbReference type="Pfam" id="PF02735">
    <property type="entry name" value="Ku"/>
    <property type="match status" value="1"/>
</dbReference>
<dbReference type="Pfam" id="PF03731">
    <property type="entry name" value="Ku_N"/>
    <property type="match status" value="1"/>
</dbReference>
<dbReference type="Pfam" id="PF08785">
    <property type="entry name" value="Ku_PK_bind"/>
    <property type="match status" value="1"/>
</dbReference>
<dbReference type="PIRSF" id="PIRSF016570">
    <property type="entry name" value="Ku80"/>
    <property type="match status" value="1"/>
</dbReference>
<dbReference type="SMART" id="SM00559">
    <property type="entry name" value="Ku78"/>
    <property type="match status" value="1"/>
</dbReference>
<dbReference type="SUPFAM" id="SSF101420">
    <property type="entry name" value="C-terminal domain of Ku80"/>
    <property type="match status" value="1"/>
</dbReference>
<dbReference type="SUPFAM" id="SSF100939">
    <property type="entry name" value="SPOC domain-like"/>
    <property type="match status" value="1"/>
</dbReference>
<dbReference type="SUPFAM" id="SSF53300">
    <property type="entry name" value="vWA-like"/>
    <property type="match status" value="1"/>
</dbReference>
<keyword id="KW-0067">ATP-binding</keyword>
<keyword id="KW-0158">Chromosome</keyword>
<keyword id="KW-0227">DNA damage</keyword>
<keyword id="KW-0233">DNA recombination</keyword>
<keyword id="KW-0234">DNA repair</keyword>
<keyword id="KW-0238">DNA-binding</keyword>
<keyword id="KW-0347">Helicase</keyword>
<keyword id="KW-0378">Hydrolase</keyword>
<keyword id="KW-0547">Nucleotide-binding</keyword>
<keyword id="KW-0539">Nucleus</keyword>
<keyword id="KW-1185">Reference proteome</keyword>
<keyword id="KW-0779">Telomere</keyword>
<evidence type="ECO:0000250" key="1"/>
<evidence type="ECO:0000256" key="2">
    <source>
        <dbReference type="SAM" id="MobiDB-lite"/>
    </source>
</evidence>
<evidence type="ECO:0000305" key="3"/>
<feature type="chain" id="PRO_0000278353" description="ATP-dependent DNA helicase II subunit 2">
    <location>
        <begin position="1"/>
        <end position="725"/>
    </location>
</feature>
<feature type="domain" description="Ku">
    <location>
        <begin position="235"/>
        <end position="484"/>
    </location>
</feature>
<feature type="region of interest" description="Disordered" evidence="2">
    <location>
        <begin position="277"/>
        <end position="299"/>
    </location>
</feature>
<feature type="region of interest" description="Disordered" evidence="2">
    <location>
        <begin position="567"/>
        <end position="586"/>
    </location>
</feature>
<feature type="compositionally biased region" description="Polar residues" evidence="2">
    <location>
        <begin position="281"/>
        <end position="299"/>
    </location>
</feature>
<feature type="compositionally biased region" description="Basic residues" evidence="2">
    <location>
        <begin position="567"/>
        <end position="576"/>
    </location>
</feature>
<organism>
    <name type="scientific">Emericella nidulans (strain FGSC A4 / ATCC 38163 / CBS 112.46 / NRRL 194 / M139)</name>
    <name type="common">Aspergillus nidulans</name>
    <dbReference type="NCBI Taxonomy" id="227321"/>
    <lineage>
        <taxon>Eukaryota</taxon>
        <taxon>Fungi</taxon>
        <taxon>Dikarya</taxon>
        <taxon>Ascomycota</taxon>
        <taxon>Pezizomycotina</taxon>
        <taxon>Eurotiomycetes</taxon>
        <taxon>Eurotiomycetidae</taxon>
        <taxon>Eurotiales</taxon>
        <taxon>Aspergillaceae</taxon>
        <taxon>Aspergillus</taxon>
        <taxon>Aspergillus subgen. Nidulantes</taxon>
    </lineage>
</organism>
<name>KU80_EMENI</name>
<reference key="1">
    <citation type="journal article" date="2005" name="Nature">
        <title>Sequencing of Aspergillus nidulans and comparative analysis with A. fumigatus and A. oryzae.</title>
        <authorList>
            <person name="Galagan J.E."/>
            <person name="Calvo S.E."/>
            <person name="Cuomo C."/>
            <person name="Ma L.-J."/>
            <person name="Wortman J.R."/>
            <person name="Batzoglou S."/>
            <person name="Lee S.-I."/>
            <person name="Bastuerkmen M."/>
            <person name="Spevak C.C."/>
            <person name="Clutterbuck J."/>
            <person name="Kapitonov V."/>
            <person name="Jurka J."/>
            <person name="Scazzocchio C."/>
            <person name="Farman M.L."/>
            <person name="Butler J."/>
            <person name="Purcell S."/>
            <person name="Harris S."/>
            <person name="Braus G.H."/>
            <person name="Draht O."/>
            <person name="Busch S."/>
            <person name="D'Enfert C."/>
            <person name="Bouchier C."/>
            <person name="Goldman G.H."/>
            <person name="Bell-Pedersen D."/>
            <person name="Griffiths-Jones S."/>
            <person name="Doonan J.H."/>
            <person name="Yu J."/>
            <person name="Vienken K."/>
            <person name="Pain A."/>
            <person name="Freitag M."/>
            <person name="Selker E.U."/>
            <person name="Archer D.B."/>
            <person name="Penalva M.A."/>
            <person name="Oakley B.R."/>
            <person name="Momany M."/>
            <person name="Tanaka T."/>
            <person name="Kumagai T."/>
            <person name="Asai K."/>
            <person name="Machida M."/>
            <person name="Nierman W.C."/>
            <person name="Denning D.W."/>
            <person name="Caddick M.X."/>
            <person name="Hynes M."/>
            <person name="Paoletti M."/>
            <person name="Fischer R."/>
            <person name="Miller B.L."/>
            <person name="Dyer P.S."/>
            <person name="Sachs M.S."/>
            <person name="Osmani S.A."/>
            <person name="Birren B.W."/>
        </authorList>
    </citation>
    <scope>NUCLEOTIDE SEQUENCE [LARGE SCALE GENOMIC DNA]</scope>
    <source>
        <strain>FGSC A4 / ATCC 38163 / CBS 112.46 / NRRL 194 / M139</strain>
    </source>
</reference>
<reference key="2">
    <citation type="journal article" date="2009" name="Fungal Genet. Biol.">
        <title>The 2008 update of the Aspergillus nidulans genome annotation: a community effort.</title>
        <authorList>
            <person name="Wortman J.R."/>
            <person name="Gilsenan J.M."/>
            <person name="Joardar V."/>
            <person name="Deegan J."/>
            <person name="Clutterbuck J."/>
            <person name="Andersen M.R."/>
            <person name="Archer D."/>
            <person name="Bencina M."/>
            <person name="Braus G."/>
            <person name="Coutinho P."/>
            <person name="von Dohren H."/>
            <person name="Doonan J."/>
            <person name="Driessen A.J."/>
            <person name="Durek P."/>
            <person name="Espeso E."/>
            <person name="Fekete E."/>
            <person name="Flipphi M."/>
            <person name="Estrada C.G."/>
            <person name="Geysens S."/>
            <person name="Goldman G."/>
            <person name="de Groot P.W."/>
            <person name="Hansen K."/>
            <person name="Harris S.D."/>
            <person name="Heinekamp T."/>
            <person name="Helmstaedt K."/>
            <person name="Henrissat B."/>
            <person name="Hofmann G."/>
            <person name="Homan T."/>
            <person name="Horio T."/>
            <person name="Horiuchi H."/>
            <person name="James S."/>
            <person name="Jones M."/>
            <person name="Karaffa L."/>
            <person name="Karanyi Z."/>
            <person name="Kato M."/>
            <person name="Keller N."/>
            <person name="Kelly D.E."/>
            <person name="Kiel J.A."/>
            <person name="Kim J.M."/>
            <person name="van der Klei I.J."/>
            <person name="Klis F.M."/>
            <person name="Kovalchuk A."/>
            <person name="Krasevec N."/>
            <person name="Kubicek C.P."/>
            <person name="Liu B."/>
            <person name="Maccabe A."/>
            <person name="Meyer V."/>
            <person name="Mirabito P."/>
            <person name="Miskei M."/>
            <person name="Mos M."/>
            <person name="Mullins J."/>
            <person name="Nelson D.R."/>
            <person name="Nielsen J."/>
            <person name="Oakley B.R."/>
            <person name="Osmani S.A."/>
            <person name="Pakula T."/>
            <person name="Paszewski A."/>
            <person name="Paulsen I."/>
            <person name="Pilsyk S."/>
            <person name="Pocsi I."/>
            <person name="Punt P.J."/>
            <person name="Ram A.F."/>
            <person name="Ren Q."/>
            <person name="Robellet X."/>
            <person name="Robson G."/>
            <person name="Seiboth B."/>
            <person name="van Solingen P."/>
            <person name="Specht T."/>
            <person name="Sun J."/>
            <person name="Taheri-Talesh N."/>
            <person name="Takeshita N."/>
            <person name="Ussery D."/>
            <person name="vanKuyk P.A."/>
            <person name="Visser H."/>
            <person name="van de Vondervoort P.J."/>
            <person name="de Vries R.P."/>
            <person name="Walton J."/>
            <person name="Xiang X."/>
            <person name="Xiong Y."/>
            <person name="Zeng A.P."/>
            <person name="Brandt B.W."/>
            <person name="Cornell M.J."/>
            <person name="van den Hondel C.A."/>
            <person name="Visser J."/>
            <person name="Oliver S.G."/>
            <person name="Turner G."/>
        </authorList>
    </citation>
    <scope>GENOME REANNOTATION</scope>
    <source>
        <strain>FGSC A4 / ATCC 38163 / CBS 112.46 / NRRL 194 / M139</strain>
    </source>
</reference>